<comment type="function">
    <text evidence="1">The glycine cleavage system catalyzes the degradation of glycine. The H protein shuttles the methylamine group of glycine from the P protein to the T protein.</text>
</comment>
<comment type="cofactor">
    <cofactor evidence="1">
        <name>(R)-lipoate</name>
        <dbReference type="ChEBI" id="CHEBI:83088"/>
    </cofactor>
    <text evidence="1">Binds 1 lipoyl cofactor covalently.</text>
</comment>
<comment type="subunit">
    <text evidence="1">The glycine cleavage system is composed of four proteins: P, T, L and H.</text>
</comment>
<comment type="similarity">
    <text evidence="1">Belongs to the GcvH family.</text>
</comment>
<dbReference type="EMBL" id="CP000614">
    <property type="protein sequence ID" value="ABO53173.1"/>
    <property type="molecule type" value="Genomic_DNA"/>
</dbReference>
<dbReference type="SMR" id="A4JA70"/>
<dbReference type="KEGG" id="bvi:Bcep1808_0150"/>
<dbReference type="eggNOG" id="COG0509">
    <property type="taxonomic scope" value="Bacteria"/>
</dbReference>
<dbReference type="HOGENOM" id="CLU_097408_2_1_4"/>
<dbReference type="Proteomes" id="UP000002287">
    <property type="component" value="Chromosome 1"/>
</dbReference>
<dbReference type="GO" id="GO:0005829">
    <property type="term" value="C:cytosol"/>
    <property type="evidence" value="ECO:0007669"/>
    <property type="project" value="TreeGrafter"/>
</dbReference>
<dbReference type="GO" id="GO:0005960">
    <property type="term" value="C:glycine cleavage complex"/>
    <property type="evidence" value="ECO:0007669"/>
    <property type="project" value="InterPro"/>
</dbReference>
<dbReference type="GO" id="GO:0019464">
    <property type="term" value="P:glycine decarboxylation via glycine cleavage system"/>
    <property type="evidence" value="ECO:0007669"/>
    <property type="project" value="UniProtKB-UniRule"/>
</dbReference>
<dbReference type="CDD" id="cd06848">
    <property type="entry name" value="GCS_H"/>
    <property type="match status" value="1"/>
</dbReference>
<dbReference type="Gene3D" id="2.40.50.100">
    <property type="match status" value="1"/>
</dbReference>
<dbReference type="HAMAP" id="MF_00272">
    <property type="entry name" value="GcvH"/>
    <property type="match status" value="1"/>
</dbReference>
<dbReference type="InterPro" id="IPR003016">
    <property type="entry name" value="2-oxoA_DH_lipoyl-BS"/>
</dbReference>
<dbReference type="InterPro" id="IPR000089">
    <property type="entry name" value="Biotin_lipoyl"/>
</dbReference>
<dbReference type="InterPro" id="IPR002930">
    <property type="entry name" value="GCV_H"/>
</dbReference>
<dbReference type="InterPro" id="IPR033753">
    <property type="entry name" value="GCV_H/Fam206"/>
</dbReference>
<dbReference type="InterPro" id="IPR017453">
    <property type="entry name" value="GCV_H_sub"/>
</dbReference>
<dbReference type="InterPro" id="IPR011053">
    <property type="entry name" value="Single_hybrid_motif"/>
</dbReference>
<dbReference type="NCBIfam" id="TIGR00527">
    <property type="entry name" value="gcvH"/>
    <property type="match status" value="1"/>
</dbReference>
<dbReference type="NCBIfam" id="NF002270">
    <property type="entry name" value="PRK01202.1"/>
    <property type="match status" value="1"/>
</dbReference>
<dbReference type="PANTHER" id="PTHR11715">
    <property type="entry name" value="GLYCINE CLEAVAGE SYSTEM H PROTEIN"/>
    <property type="match status" value="1"/>
</dbReference>
<dbReference type="PANTHER" id="PTHR11715:SF3">
    <property type="entry name" value="GLYCINE CLEAVAGE SYSTEM H PROTEIN-RELATED"/>
    <property type="match status" value="1"/>
</dbReference>
<dbReference type="Pfam" id="PF01597">
    <property type="entry name" value="GCV_H"/>
    <property type="match status" value="1"/>
</dbReference>
<dbReference type="SUPFAM" id="SSF51230">
    <property type="entry name" value="Single hybrid motif"/>
    <property type="match status" value="1"/>
</dbReference>
<dbReference type="PROSITE" id="PS50968">
    <property type="entry name" value="BIOTINYL_LIPOYL"/>
    <property type="match status" value="1"/>
</dbReference>
<dbReference type="PROSITE" id="PS00189">
    <property type="entry name" value="LIPOYL"/>
    <property type="match status" value="1"/>
</dbReference>
<proteinExistence type="inferred from homology"/>
<reference key="1">
    <citation type="submission" date="2007-03" db="EMBL/GenBank/DDBJ databases">
        <title>Complete sequence of chromosome 1 of Burkholderia vietnamiensis G4.</title>
        <authorList>
            <consortium name="US DOE Joint Genome Institute"/>
            <person name="Copeland A."/>
            <person name="Lucas S."/>
            <person name="Lapidus A."/>
            <person name="Barry K."/>
            <person name="Detter J.C."/>
            <person name="Glavina del Rio T."/>
            <person name="Hammon N."/>
            <person name="Israni S."/>
            <person name="Dalin E."/>
            <person name="Tice H."/>
            <person name="Pitluck S."/>
            <person name="Chain P."/>
            <person name="Malfatti S."/>
            <person name="Shin M."/>
            <person name="Vergez L."/>
            <person name="Schmutz J."/>
            <person name="Larimer F."/>
            <person name="Land M."/>
            <person name="Hauser L."/>
            <person name="Kyrpides N."/>
            <person name="Tiedje J."/>
            <person name="Richardson P."/>
        </authorList>
    </citation>
    <scope>NUCLEOTIDE SEQUENCE [LARGE SCALE GENOMIC DNA]</scope>
    <source>
        <strain>G4 / LMG 22486</strain>
    </source>
</reference>
<evidence type="ECO:0000255" key="1">
    <source>
        <dbReference type="HAMAP-Rule" id="MF_00272"/>
    </source>
</evidence>
<evidence type="ECO:0000255" key="2">
    <source>
        <dbReference type="PROSITE-ProRule" id="PRU01066"/>
    </source>
</evidence>
<gene>
    <name evidence="1" type="primary">gcvH</name>
    <name type="ordered locus">Bcep1808_0150</name>
</gene>
<name>GCSH_BURVG</name>
<sequence length="126" mass="13227">MSNVPADLKYTDEHEWVRTEADGTLTVGITDHAQSTLGDIVFLELPQVGKSVNAGDAVGVVESVKAASDIYSPVSGEVVAINEEATDSPEGVNGDAYGVWLFKLKLADGASTDKLIDAAAYSKLID</sequence>
<protein>
    <recommendedName>
        <fullName evidence="1">Glycine cleavage system H protein</fullName>
    </recommendedName>
</protein>
<feature type="chain" id="PRO_1000022189" description="Glycine cleavage system H protein">
    <location>
        <begin position="1"/>
        <end position="126"/>
    </location>
</feature>
<feature type="domain" description="Lipoyl-binding" evidence="2">
    <location>
        <begin position="24"/>
        <end position="105"/>
    </location>
</feature>
<feature type="modified residue" description="N6-lipoyllysine" evidence="1">
    <location>
        <position position="65"/>
    </location>
</feature>
<accession>A4JA70</accession>
<organism>
    <name type="scientific">Burkholderia vietnamiensis (strain G4 / LMG 22486)</name>
    <name type="common">Burkholderia cepacia (strain R1808)</name>
    <dbReference type="NCBI Taxonomy" id="269482"/>
    <lineage>
        <taxon>Bacteria</taxon>
        <taxon>Pseudomonadati</taxon>
        <taxon>Pseudomonadota</taxon>
        <taxon>Betaproteobacteria</taxon>
        <taxon>Burkholderiales</taxon>
        <taxon>Burkholderiaceae</taxon>
        <taxon>Burkholderia</taxon>
        <taxon>Burkholderia cepacia complex</taxon>
    </lineage>
</organism>
<keyword id="KW-0450">Lipoyl</keyword>